<proteinExistence type="inferred from homology"/>
<keyword id="KW-1185">Reference proteome</keyword>
<protein>
    <recommendedName>
        <fullName>Uncharacterized protein MT2982.1</fullName>
    </recommendedName>
</protein>
<sequence length="370" mass="39770">MKRVDTIRPRSRAVRLHVRGLGLPDETAIQLWIVDGRISTEPVAGADTVFDGGWILPGLVDAHCHVGLGKHGNVELDEAIAQAETERDVGALLLRDCGSPTDTRGLDDHEDLPRIIRAGRHLARPKRYIAGFAVELEDESQLPAAVAEQARRGDGWVKLVGDWIDRQIGDLAPLWSDDVLKAAIDTAHAQGARVTAHVFSEDALPGLINAGIDCIEHGTGLTDDTIALMLEHGTALVPTLINLENFPGIADAAGRYPTYAAHMRDLYARGYGRVAAAREAGVPVYAGTDAGSTIEHGRIADEVAALQRIGMTAHEALGAACWDARRWLGRPGLDDRASADLLCYAQDPRQGPGVLQHPDLVILRGRTFGP</sequence>
<evidence type="ECO:0000305" key="1"/>
<reference key="1">
    <citation type="journal article" date="2002" name="J. Bacteriol.">
        <title>Whole-genome comparison of Mycobacterium tuberculosis clinical and laboratory strains.</title>
        <authorList>
            <person name="Fleischmann R.D."/>
            <person name="Alland D."/>
            <person name="Eisen J.A."/>
            <person name="Carpenter L."/>
            <person name="White O."/>
            <person name="Peterson J.D."/>
            <person name="DeBoy R.T."/>
            <person name="Dodson R.J."/>
            <person name="Gwinn M.L."/>
            <person name="Haft D.H."/>
            <person name="Hickey E.K."/>
            <person name="Kolonay J.F."/>
            <person name="Nelson W.C."/>
            <person name="Umayam L.A."/>
            <person name="Ermolaeva M.D."/>
            <person name="Salzberg S.L."/>
            <person name="Delcher A."/>
            <person name="Utterback T.R."/>
            <person name="Weidman J.F."/>
            <person name="Khouri H.M."/>
            <person name="Gill J."/>
            <person name="Mikula A."/>
            <person name="Bishai W."/>
            <person name="Jacobs W.R. Jr."/>
            <person name="Venter J.C."/>
            <person name="Fraser C.M."/>
        </authorList>
    </citation>
    <scope>NUCLEOTIDE SEQUENCE [LARGE SCALE GENOMIC DNA]</scope>
    <source>
        <strain>CDC 1551 / Oshkosh</strain>
    </source>
</reference>
<gene>
    <name type="ordered locus">MT2982.1</name>
</gene>
<comment type="similarity">
    <text evidence="1">Belongs to the metallo-dependent hydrolases superfamily.</text>
</comment>
<comment type="sequence caution" evidence="1">
    <conflict type="frameshift">
        <sequence resource="EMBL" id="AE000516"/>
    </conflict>
</comment>
<dbReference type="EMBL" id="AE000516">
    <property type="status" value="NOT_ANNOTATED_CDS"/>
    <property type="molecule type" value="Genomic_DNA"/>
</dbReference>
<dbReference type="PIR" id="C70747">
    <property type="entry name" value="C70747"/>
</dbReference>
<dbReference type="RefSeq" id="WP_003899537.1">
    <property type="nucleotide sequence ID" value="NZ_KK341227.1"/>
</dbReference>
<dbReference type="SMR" id="P9WL22"/>
<dbReference type="PATRIC" id="fig|83331.31.peg.3223"/>
<dbReference type="Proteomes" id="UP000001020">
    <property type="component" value="Chromosome"/>
</dbReference>
<dbReference type="GO" id="GO:0016810">
    <property type="term" value="F:hydrolase activity, acting on carbon-nitrogen (but not peptide) bonds"/>
    <property type="evidence" value="ECO:0007669"/>
    <property type="project" value="InterPro"/>
</dbReference>
<dbReference type="CDD" id="cd01299">
    <property type="entry name" value="Met_dep_hydrolase_A"/>
    <property type="match status" value="1"/>
</dbReference>
<dbReference type="FunFam" id="3.20.20.140:FF:000054">
    <property type="entry name" value="Imidazolonepropionase-like amidohydrolase"/>
    <property type="match status" value="1"/>
</dbReference>
<dbReference type="Gene3D" id="3.20.20.140">
    <property type="entry name" value="Metal-dependent hydrolases"/>
    <property type="match status" value="1"/>
</dbReference>
<dbReference type="Gene3D" id="2.30.40.10">
    <property type="entry name" value="Urease, subunit C, domain 1"/>
    <property type="match status" value="1"/>
</dbReference>
<dbReference type="InterPro" id="IPR006680">
    <property type="entry name" value="Amidohydro-rel"/>
</dbReference>
<dbReference type="InterPro" id="IPR011059">
    <property type="entry name" value="Metal-dep_hydrolase_composite"/>
</dbReference>
<dbReference type="InterPro" id="IPR032466">
    <property type="entry name" value="Metal_Hydrolase"/>
</dbReference>
<dbReference type="InterPro" id="IPR051781">
    <property type="entry name" value="Metallo-dep_Hydrolase"/>
</dbReference>
<dbReference type="PANTHER" id="PTHR43135">
    <property type="entry name" value="ALPHA-D-RIBOSE 1-METHYLPHOSPHONATE 5-TRIPHOSPHATE DIPHOSPHATASE"/>
    <property type="match status" value="1"/>
</dbReference>
<dbReference type="PANTHER" id="PTHR43135:SF4">
    <property type="entry name" value="AMIDOHYDROLASE-RELATED DOMAIN-CONTAINING PROTEIN"/>
    <property type="match status" value="1"/>
</dbReference>
<dbReference type="Pfam" id="PF01979">
    <property type="entry name" value="Amidohydro_1"/>
    <property type="match status" value="1"/>
</dbReference>
<dbReference type="SUPFAM" id="SSF51556">
    <property type="entry name" value="Metallo-dependent hydrolases"/>
    <property type="match status" value="1"/>
</dbReference>
<organism>
    <name type="scientific">Mycobacterium tuberculosis (strain CDC 1551 / Oshkosh)</name>
    <dbReference type="NCBI Taxonomy" id="83331"/>
    <lineage>
        <taxon>Bacteria</taxon>
        <taxon>Bacillati</taxon>
        <taxon>Actinomycetota</taxon>
        <taxon>Actinomycetes</taxon>
        <taxon>Mycobacteriales</taxon>
        <taxon>Mycobacteriaceae</taxon>
        <taxon>Mycobacterium</taxon>
        <taxon>Mycobacterium tuberculosis complex</taxon>
    </lineage>
</organism>
<name>Y2915_MYCTO</name>
<accession>P9WL22</accession>
<accession>L0TDX9</accession>
<accession>P68917</accession>
<accession>Q10965</accession>
<feature type="chain" id="PRO_0000427554" description="Uncharacterized protein MT2982.1">
    <location>
        <begin position="1"/>
        <end position="370"/>
    </location>
</feature>